<keyword id="KW-1064">Adaptive immunity</keyword>
<keyword id="KW-0025">Alternative splicing</keyword>
<keyword id="KW-1003">Cell membrane</keyword>
<keyword id="KW-0143">Chaperone</keyword>
<keyword id="KW-1015">Disulfide bond</keyword>
<keyword id="KW-0256">Endoplasmic reticulum</keyword>
<keyword id="KW-0967">Endosome</keyword>
<keyword id="KW-0325">Glycoprotein</keyword>
<keyword id="KW-0333">Golgi apparatus</keyword>
<keyword id="KW-0391">Immunity</keyword>
<keyword id="KW-0458">Lysosome</keyword>
<keyword id="KW-0472">Membrane</keyword>
<keyword id="KW-0597">Phosphoprotein</keyword>
<keyword id="KW-0654">Proteoglycan</keyword>
<keyword id="KW-1185">Reference proteome</keyword>
<keyword id="KW-0964">Secreted</keyword>
<keyword id="KW-0735">Signal-anchor</keyword>
<keyword id="KW-0812">Transmembrane</keyword>
<keyword id="KW-1133">Transmembrane helix</keyword>
<evidence type="ECO:0000250" key="1"/>
<evidence type="ECO:0000250" key="2">
    <source>
        <dbReference type="UniProtKB" id="P04233"/>
    </source>
</evidence>
<evidence type="ECO:0000255" key="3"/>
<evidence type="ECO:0000255" key="4">
    <source>
        <dbReference type="PROSITE-ProRule" id="PRU00500"/>
    </source>
</evidence>
<evidence type="ECO:0000256" key="5">
    <source>
        <dbReference type="SAM" id="MobiDB-lite"/>
    </source>
</evidence>
<evidence type="ECO:0000269" key="6">
    <source>
    </source>
</evidence>
<evidence type="ECO:0000269" key="7">
    <source>
    </source>
</evidence>
<evidence type="ECO:0000269" key="8">
    <source>
    </source>
</evidence>
<evidence type="ECO:0000269" key="9">
    <source>
    </source>
</evidence>
<evidence type="ECO:0000269" key="10">
    <source>
    </source>
</evidence>
<evidence type="ECO:0000269" key="11">
    <source>
    </source>
</evidence>
<evidence type="ECO:0000303" key="12">
    <source>
    </source>
</evidence>
<evidence type="ECO:0000303" key="13">
    <source>
    </source>
</evidence>
<evidence type="ECO:0000303" key="14">
    <source>
    </source>
</evidence>
<evidence type="ECO:0000303" key="15">
    <source>
    </source>
</evidence>
<evidence type="ECO:0000305" key="16"/>
<evidence type="ECO:0000312" key="17">
    <source>
        <dbReference type="MGI" id="MGI:96534"/>
    </source>
</evidence>
<evidence type="ECO:0007744" key="18">
    <source>
    </source>
</evidence>
<accession>P04441</accession>
<accession>O19452</accession>
<organism>
    <name type="scientific">Mus musculus</name>
    <name type="common">Mouse</name>
    <dbReference type="NCBI Taxonomy" id="10090"/>
    <lineage>
        <taxon>Eukaryota</taxon>
        <taxon>Metazoa</taxon>
        <taxon>Chordata</taxon>
        <taxon>Craniata</taxon>
        <taxon>Vertebrata</taxon>
        <taxon>Euteleostomi</taxon>
        <taxon>Mammalia</taxon>
        <taxon>Eutheria</taxon>
        <taxon>Euarchontoglires</taxon>
        <taxon>Glires</taxon>
        <taxon>Rodentia</taxon>
        <taxon>Myomorpha</taxon>
        <taxon>Muroidea</taxon>
        <taxon>Muridae</taxon>
        <taxon>Murinae</taxon>
        <taxon>Mus</taxon>
        <taxon>Mus</taxon>
    </lineage>
</organism>
<gene>
    <name evidence="17" type="primary">Cd74</name>
    <name evidence="15" type="synonym">Ii</name>
</gene>
<sequence length="279" mass="31557">MDDQRDLISNHEQLPILGNRPREPERCSRGALYTGVSVLVALLLAGQATTAYFLYQQQGRLDKLTITSQNLQLESLRMKLPKSAKPVSQMRMATPLLMRPMSMDNMLLGPVKNVTKYGNMTQDHVMHLLTRSGPLEYPQLKGTFPENLKHLKNSMDGVNWKIFESWMKQWLLFEMSKNSLEEKKPTEAPPKVLTKCQEEVSHIPAVYPGAFRPKCDENGNYLPLQCHGSTGYCWCVFPNGTEVPHTKSRGRHNCSEPLDMEDLSSGLGVTRQELGQVTL</sequence>
<feature type="chain" id="PRO_0000067955" description="H-2 class II histocompatibility antigen gamma chain">
    <location>
        <begin position="1"/>
        <end position="279"/>
    </location>
</feature>
<feature type="peptide" id="PRO_0000448887" description="Class-II-associated invariant chain peptide" evidence="2">
    <location>
        <begin position="80"/>
        <end position="103"/>
    </location>
</feature>
<feature type="topological domain" description="Cytoplasmic" evidence="3">
    <location>
        <begin position="1"/>
        <end position="29"/>
    </location>
</feature>
<feature type="transmembrane region" description="Helical; Signal-anchor for type II membrane protein" evidence="3">
    <location>
        <begin position="30"/>
        <end position="55"/>
    </location>
</feature>
<feature type="topological domain" description="Extracellular" evidence="3">
    <location>
        <begin position="56"/>
        <end position="279"/>
    </location>
</feature>
<feature type="domain" description="Thyroglobulin type-1" evidence="4">
    <location>
        <begin position="193"/>
        <end position="254"/>
    </location>
</feature>
<feature type="region of interest" description="Disordered" evidence="5">
    <location>
        <begin position="1"/>
        <end position="23"/>
    </location>
</feature>
<feature type="modified residue" description="Phosphoserine" evidence="18">
    <location>
        <position position="9"/>
    </location>
</feature>
<feature type="glycosylation site" description="N-linked (GlcNAc...) asparagine" evidence="3">
    <location>
        <position position="113"/>
    </location>
</feature>
<feature type="glycosylation site" description="N-linked (GlcNAc...) asparagine" evidence="3">
    <location>
        <position position="119"/>
    </location>
</feature>
<feature type="glycosylation site" description="O-linked (Xyl...) (chondroitin sulfate) serine" evidence="9">
    <location>
        <position position="265"/>
    </location>
</feature>
<feature type="disulfide bond" evidence="4">
    <location>
        <begin position="196"/>
        <end position="215"/>
    </location>
</feature>
<feature type="disulfide bond" evidence="4">
    <location>
        <begin position="226"/>
        <end position="233"/>
    </location>
</feature>
<feature type="disulfide bond" evidence="4">
    <location>
        <begin position="235"/>
        <end position="254"/>
    </location>
</feature>
<feature type="splice variant" id="VSP_005332" description="In isoform Short." evidence="14">
    <location>
        <begin position="192"/>
        <end position="255"/>
    </location>
</feature>
<feature type="mutagenesis site" description="No addition of glycosaminoglycan; no effect on the synthesis of the protein." evidence="9">
    <original>S</original>
    <variation>A</variation>
    <location>
        <position position="265"/>
    </location>
</feature>
<feature type="sequence conflict" description="In Ref. 2." evidence="16" ref="2">
    <original>N</original>
    <variation>M</variation>
    <location>
        <position position="10"/>
    </location>
</feature>
<feature type="sequence conflict" description="In Ref. 2." evidence="16" ref="2">
    <original>N</original>
    <variation>Q</variation>
    <location>
        <position position="113"/>
    </location>
</feature>
<feature type="sequence conflict" description="In Ref. 1; CAB37297." evidence="16" ref="1">
    <original>STG</original>
    <variation>RHC</variation>
    <location>
        <begin position="229"/>
        <end position="231"/>
    </location>
</feature>
<name>HG2A_MOUSE</name>
<dbReference type="EMBL" id="X05428">
    <property type="protein sequence ID" value="CAA29010.1"/>
    <property type="molecule type" value="Genomic_DNA"/>
</dbReference>
<dbReference type="EMBL" id="X05429">
    <property type="protein sequence ID" value="CAA29012.2"/>
    <property type="molecule type" value="Genomic_DNA"/>
</dbReference>
<dbReference type="EMBL" id="X05430">
    <property type="protein sequence ID" value="CAB37297.1"/>
    <property type="molecule type" value="Genomic_DNA"/>
</dbReference>
<dbReference type="EMBL" id="X13414">
    <property type="status" value="NOT_ANNOTATED_CDS"/>
    <property type="molecule type" value="Genomic_DNA"/>
</dbReference>
<dbReference type="EMBL" id="BC003476">
    <property type="protein sequence ID" value="AAH03476.1"/>
    <property type="molecule type" value="mRNA"/>
</dbReference>
<dbReference type="EMBL" id="X07129">
    <property type="protein sequence ID" value="CAA30141.1"/>
    <property type="molecule type" value="mRNA"/>
</dbReference>
<dbReference type="EMBL" id="M35872">
    <property type="protein sequence ID" value="AAA37897.1"/>
    <property type="molecule type" value="Genomic_DNA"/>
</dbReference>
<dbReference type="EMBL" id="X00496">
    <property type="protein sequence ID" value="CAA25191.1"/>
    <property type="molecule type" value="mRNA"/>
</dbReference>
<dbReference type="CCDS" id="CCDS37835.1">
    <molecule id="P04441-1"/>
</dbReference>
<dbReference type="CCDS" id="CCDS50299.1">
    <molecule id="P04441-2"/>
</dbReference>
<dbReference type="PIR" id="B27866">
    <property type="entry name" value="HLHMSG"/>
</dbReference>
<dbReference type="RefSeq" id="NP_001036070.1">
    <molecule id="P04441-1"/>
    <property type="nucleotide sequence ID" value="NM_001042605.1"/>
</dbReference>
<dbReference type="RefSeq" id="NP_034675.1">
    <molecule id="P04441-2"/>
    <property type="nucleotide sequence ID" value="NM_010545.3"/>
</dbReference>
<dbReference type="SMR" id="P04441"/>
<dbReference type="BioGRID" id="200600">
    <property type="interactions" value="2"/>
</dbReference>
<dbReference type="CORUM" id="P04441"/>
<dbReference type="FunCoup" id="P04441">
    <property type="interactions" value="374"/>
</dbReference>
<dbReference type="IntAct" id="P04441">
    <property type="interactions" value="1"/>
</dbReference>
<dbReference type="MINT" id="P04441"/>
<dbReference type="STRING" id="10090.ENSMUSP00000095171"/>
<dbReference type="MEROPS" id="I31.002"/>
<dbReference type="GlyCosmos" id="P04441">
    <property type="glycosylation" value="3 sites, No reported glycans"/>
</dbReference>
<dbReference type="GlyGen" id="P04441">
    <property type="glycosylation" value="4 sites, 2 N-linked glycans (2 sites)"/>
</dbReference>
<dbReference type="iPTMnet" id="P04441"/>
<dbReference type="PhosphoSitePlus" id="P04441"/>
<dbReference type="SwissPalm" id="P04441"/>
<dbReference type="PaxDb" id="10090-ENSMUSP00000095171"/>
<dbReference type="PeptideAtlas" id="P04441"/>
<dbReference type="ProteomicsDB" id="269741">
    <molecule id="P04441-1"/>
</dbReference>
<dbReference type="ProteomicsDB" id="269742">
    <molecule id="P04441-2"/>
</dbReference>
<dbReference type="Antibodypedia" id="2245">
    <property type="antibodies" value="2561 antibodies from 54 providers"/>
</dbReference>
<dbReference type="DNASU" id="16149"/>
<dbReference type="Ensembl" id="ENSMUST00000050487.16">
    <molecule id="P04441-2"/>
    <property type="protein sequence ID" value="ENSMUSP00000057836.9"/>
    <property type="gene ID" value="ENSMUSG00000024610.17"/>
</dbReference>
<dbReference type="Ensembl" id="ENSMUST00000097563.9">
    <molecule id="P04441-1"/>
    <property type="protein sequence ID" value="ENSMUSP00000095171.3"/>
    <property type="gene ID" value="ENSMUSG00000024610.17"/>
</dbReference>
<dbReference type="GeneID" id="16149"/>
<dbReference type="KEGG" id="mmu:16149"/>
<dbReference type="UCSC" id="uc008faz.1">
    <molecule id="P04441-1"/>
    <property type="organism name" value="mouse"/>
</dbReference>
<dbReference type="AGR" id="MGI:96534"/>
<dbReference type="CTD" id="972"/>
<dbReference type="MGI" id="MGI:96534">
    <property type="gene designation" value="Cd74"/>
</dbReference>
<dbReference type="VEuPathDB" id="HostDB:ENSMUSG00000024610"/>
<dbReference type="eggNOG" id="KOG1214">
    <property type="taxonomic scope" value="Eukaryota"/>
</dbReference>
<dbReference type="GeneTree" id="ENSGT00390000008961"/>
<dbReference type="HOGENOM" id="CLU_086066_1_0_1"/>
<dbReference type="InParanoid" id="P04441"/>
<dbReference type="OMA" id="HHNCSEP"/>
<dbReference type="OrthoDB" id="406800at2759"/>
<dbReference type="PhylomeDB" id="P04441"/>
<dbReference type="TreeFam" id="TF317779"/>
<dbReference type="Reactome" id="R-MMU-202733">
    <property type="pathway name" value="Cell surface interactions at the vascular wall"/>
</dbReference>
<dbReference type="Reactome" id="R-MMU-2132295">
    <property type="pathway name" value="MHC class II antigen presentation"/>
</dbReference>
<dbReference type="BioGRID-ORCS" id="16149">
    <property type="hits" value="2 hits in 81 CRISPR screens"/>
</dbReference>
<dbReference type="ChiTaRS" id="Cd74">
    <property type="organism name" value="mouse"/>
</dbReference>
<dbReference type="PRO" id="PR:P04441"/>
<dbReference type="Proteomes" id="UP000000589">
    <property type="component" value="Chromosome 18"/>
</dbReference>
<dbReference type="RNAct" id="P04441">
    <property type="molecule type" value="protein"/>
</dbReference>
<dbReference type="Bgee" id="ENSMUSG00000024610">
    <property type="expression patterns" value="Expressed in spleen and 59 other cell types or tissues"/>
</dbReference>
<dbReference type="ExpressionAtlas" id="P04441">
    <property type="expression patterns" value="baseline and differential"/>
</dbReference>
<dbReference type="GO" id="GO:0005783">
    <property type="term" value="C:endoplasmic reticulum"/>
    <property type="evidence" value="ECO:0000314"/>
    <property type="project" value="MGI"/>
</dbReference>
<dbReference type="GO" id="GO:0005789">
    <property type="term" value="C:endoplasmic reticulum membrane"/>
    <property type="evidence" value="ECO:0007669"/>
    <property type="project" value="UniProtKB-SubCell"/>
</dbReference>
<dbReference type="GO" id="GO:0009897">
    <property type="term" value="C:external side of plasma membrane"/>
    <property type="evidence" value="ECO:0000314"/>
    <property type="project" value="MGI"/>
</dbReference>
<dbReference type="GO" id="GO:0005576">
    <property type="term" value="C:extracellular region"/>
    <property type="evidence" value="ECO:0007669"/>
    <property type="project" value="UniProtKB-SubCell"/>
</dbReference>
<dbReference type="GO" id="GO:0005615">
    <property type="term" value="C:extracellular space"/>
    <property type="evidence" value="ECO:0000314"/>
    <property type="project" value="UniProtKB"/>
</dbReference>
<dbReference type="GO" id="GO:0005794">
    <property type="term" value="C:Golgi apparatus"/>
    <property type="evidence" value="ECO:0000314"/>
    <property type="project" value="MGI"/>
</dbReference>
<dbReference type="GO" id="GO:0005770">
    <property type="term" value="C:late endosome"/>
    <property type="evidence" value="ECO:0000314"/>
    <property type="project" value="UniProtKB"/>
</dbReference>
<dbReference type="GO" id="GO:0005764">
    <property type="term" value="C:lysosome"/>
    <property type="evidence" value="ECO:0000314"/>
    <property type="project" value="UniProtKB"/>
</dbReference>
<dbReference type="GO" id="GO:0035692">
    <property type="term" value="C:macrophage migration inhibitory factor receptor complex"/>
    <property type="evidence" value="ECO:0000314"/>
    <property type="project" value="BHF-UCL"/>
</dbReference>
<dbReference type="GO" id="GO:0042613">
    <property type="term" value="C:MHC class II protein complex"/>
    <property type="evidence" value="ECO:0000314"/>
    <property type="project" value="BHF-UCL"/>
</dbReference>
<dbReference type="GO" id="GO:0005771">
    <property type="term" value="C:multivesicular body"/>
    <property type="evidence" value="ECO:0000314"/>
    <property type="project" value="MGI"/>
</dbReference>
<dbReference type="GO" id="GO:0035693">
    <property type="term" value="C:NOS2-CD74 complex"/>
    <property type="evidence" value="ECO:0000314"/>
    <property type="project" value="BHF-UCL"/>
</dbReference>
<dbReference type="GO" id="GO:0005634">
    <property type="term" value="C:nucleus"/>
    <property type="evidence" value="ECO:0007669"/>
    <property type="project" value="Ensembl"/>
</dbReference>
<dbReference type="GO" id="GO:0005886">
    <property type="term" value="C:plasma membrane"/>
    <property type="evidence" value="ECO:0000314"/>
    <property type="project" value="MGI"/>
</dbReference>
<dbReference type="GO" id="GO:0001540">
    <property type="term" value="F:amyloid-beta binding"/>
    <property type="evidence" value="ECO:0007669"/>
    <property type="project" value="Ensembl"/>
</dbReference>
<dbReference type="GO" id="GO:0042609">
    <property type="term" value="F:CD4 receptor binding"/>
    <property type="evidence" value="ECO:0007669"/>
    <property type="project" value="Ensembl"/>
</dbReference>
<dbReference type="GO" id="GO:0004896">
    <property type="term" value="F:cytokine receptor activity"/>
    <property type="evidence" value="ECO:0000315"/>
    <property type="project" value="BHF-UCL"/>
</dbReference>
<dbReference type="GO" id="GO:0035718">
    <property type="term" value="F:macrophage migration inhibitory factor binding"/>
    <property type="evidence" value="ECO:0007669"/>
    <property type="project" value="Ensembl"/>
</dbReference>
<dbReference type="GO" id="GO:0042289">
    <property type="term" value="F:MHC class II protein binding"/>
    <property type="evidence" value="ECO:0000353"/>
    <property type="project" value="BHF-UCL"/>
</dbReference>
<dbReference type="GO" id="GO:0042658">
    <property type="term" value="F:MHC class II protein binding, via antigen binding groove"/>
    <property type="evidence" value="ECO:0007669"/>
    <property type="project" value="Ensembl"/>
</dbReference>
<dbReference type="GO" id="GO:0050998">
    <property type="term" value="F:nitric-oxide synthase binding"/>
    <property type="evidence" value="ECO:0000353"/>
    <property type="project" value="BHF-UCL"/>
</dbReference>
<dbReference type="GO" id="GO:0044183">
    <property type="term" value="F:protein folding chaperone"/>
    <property type="evidence" value="ECO:0007669"/>
    <property type="project" value="Ensembl"/>
</dbReference>
<dbReference type="GO" id="GO:0019882">
    <property type="term" value="P:antigen processing and presentation"/>
    <property type="evidence" value="ECO:0000314"/>
    <property type="project" value="MGI"/>
</dbReference>
<dbReference type="GO" id="GO:0019886">
    <property type="term" value="P:antigen processing and presentation of exogenous peptide antigen via MHC class II"/>
    <property type="evidence" value="ECO:0000315"/>
    <property type="project" value="MGI"/>
</dbReference>
<dbReference type="GO" id="GO:0051085">
    <property type="term" value="P:chaperone cofactor-dependent protein refolding"/>
    <property type="evidence" value="ECO:0000314"/>
    <property type="project" value="MGI"/>
</dbReference>
<dbReference type="GO" id="GO:0006952">
    <property type="term" value="P:defense response"/>
    <property type="evidence" value="ECO:0000315"/>
    <property type="project" value="MGI"/>
</dbReference>
<dbReference type="GO" id="GO:0016064">
    <property type="term" value="P:immunoglobulin mediated immune response"/>
    <property type="evidence" value="ECO:0000315"/>
    <property type="project" value="MGI"/>
</dbReference>
<dbReference type="GO" id="GO:0006886">
    <property type="term" value="P:intracellular protein transport"/>
    <property type="evidence" value="ECO:0000314"/>
    <property type="project" value="MGI"/>
</dbReference>
<dbReference type="GO" id="GO:0035691">
    <property type="term" value="P:macrophage migration inhibitory factor signaling pathway"/>
    <property type="evidence" value="ECO:0000314"/>
    <property type="project" value="BHF-UCL"/>
</dbReference>
<dbReference type="GO" id="GO:0043066">
    <property type="term" value="P:negative regulation of apoptotic process"/>
    <property type="evidence" value="ECO:0000250"/>
    <property type="project" value="UniProtKB"/>
</dbReference>
<dbReference type="GO" id="GO:0030336">
    <property type="term" value="P:negative regulation of cell migration"/>
    <property type="evidence" value="ECO:0007669"/>
    <property type="project" value="Ensembl"/>
</dbReference>
<dbReference type="GO" id="GO:0043518">
    <property type="term" value="P:negative regulation of DNA damage response, signal transduction by p53 class mediator"/>
    <property type="evidence" value="ECO:0000315"/>
    <property type="project" value="BHF-UCL"/>
</dbReference>
<dbReference type="GO" id="GO:1902166">
    <property type="term" value="P:negative regulation of intrinsic apoptotic signaling pathway in response to DNA damage by p53 class mediator"/>
    <property type="evidence" value="ECO:0000315"/>
    <property type="project" value="BHF-UCL"/>
</dbReference>
<dbReference type="GO" id="GO:0002906">
    <property type="term" value="P:negative regulation of mature B cell apoptotic process"/>
    <property type="evidence" value="ECO:0000315"/>
    <property type="project" value="BHF-UCL"/>
</dbReference>
<dbReference type="GO" id="GO:0002792">
    <property type="term" value="P:negative regulation of peptide secretion"/>
    <property type="evidence" value="ECO:0007669"/>
    <property type="project" value="Ensembl"/>
</dbReference>
<dbReference type="GO" id="GO:0045581">
    <property type="term" value="P:negative regulation of T cell differentiation"/>
    <property type="evidence" value="ECO:0000315"/>
    <property type="project" value="MGI"/>
</dbReference>
<dbReference type="GO" id="GO:0045060">
    <property type="term" value="P:negative thymic T cell selection"/>
    <property type="evidence" value="ECO:0000315"/>
    <property type="project" value="MGI"/>
</dbReference>
<dbReference type="GO" id="GO:0002821">
    <property type="term" value="P:positive regulation of adaptive immune response"/>
    <property type="evidence" value="ECO:0000303"/>
    <property type="project" value="BHF-UCL"/>
</dbReference>
<dbReference type="GO" id="GO:0030890">
    <property type="term" value="P:positive regulation of B cell proliferation"/>
    <property type="evidence" value="ECO:0007669"/>
    <property type="project" value="Ensembl"/>
</dbReference>
<dbReference type="GO" id="GO:0043123">
    <property type="term" value="P:positive regulation of canonical NF-kappaB signal transduction"/>
    <property type="evidence" value="ECO:0007669"/>
    <property type="project" value="Ensembl"/>
</dbReference>
<dbReference type="GO" id="GO:2000343">
    <property type="term" value="P:positive regulation of chemokine (C-X-C motif) ligand 2 production"/>
    <property type="evidence" value="ECO:0000314"/>
    <property type="project" value="BHF-UCL"/>
</dbReference>
<dbReference type="GO" id="GO:0001961">
    <property type="term" value="P:positive regulation of cytokine-mediated signaling pathway"/>
    <property type="evidence" value="ECO:0000315"/>
    <property type="project" value="BHF-UCL"/>
</dbReference>
<dbReference type="GO" id="GO:0002606">
    <property type="term" value="P:positive regulation of dendritic cell antigen processing and presentation"/>
    <property type="evidence" value="ECO:0000314"/>
    <property type="project" value="BHF-UCL"/>
</dbReference>
<dbReference type="GO" id="GO:0045893">
    <property type="term" value="P:positive regulation of DNA-templated transcription"/>
    <property type="evidence" value="ECO:0007669"/>
    <property type="project" value="Ensembl"/>
</dbReference>
<dbReference type="GO" id="GO:0070374">
    <property type="term" value="P:positive regulation of ERK1 and ERK2 cascade"/>
    <property type="evidence" value="ECO:0000315"/>
    <property type="project" value="BHF-UCL"/>
</dbReference>
<dbReference type="GO" id="GO:0048146">
    <property type="term" value="P:positive regulation of fibroblast proliferation"/>
    <property type="evidence" value="ECO:0007669"/>
    <property type="project" value="Ensembl"/>
</dbReference>
<dbReference type="GO" id="GO:0045089">
    <property type="term" value="P:positive regulation of innate immune response"/>
    <property type="evidence" value="ECO:0000305"/>
    <property type="project" value="BHF-UCL"/>
</dbReference>
<dbReference type="GO" id="GO:0032755">
    <property type="term" value="P:positive regulation of interleukin-6 production"/>
    <property type="evidence" value="ECO:0007669"/>
    <property type="project" value="Ensembl"/>
</dbReference>
<dbReference type="GO" id="GO:0032757">
    <property type="term" value="P:positive regulation of interleukin-8 production"/>
    <property type="evidence" value="ECO:0007669"/>
    <property type="project" value="Ensembl"/>
</dbReference>
<dbReference type="GO" id="GO:0060907">
    <property type="term" value="P:positive regulation of macrophage cytokine production"/>
    <property type="evidence" value="ECO:0000314"/>
    <property type="project" value="BHF-UCL"/>
</dbReference>
<dbReference type="GO" id="GO:2000448">
    <property type="term" value="P:positive regulation of macrophage migration inhibitory factor signaling pathway"/>
    <property type="evidence" value="ECO:0007669"/>
    <property type="project" value="Ensembl"/>
</dbReference>
<dbReference type="GO" id="GO:0045657">
    <property type="term" value="P:positive regulation of monocyte differentiation"/>
    <property type="evidence" value="ECO:0007669"/>
    <property type="project" value="Ensembl"/>
</dbReference>
<dbReference type="GO" id="GO:0090023">
    <property type="term" value="P:positive regulation of neutrophil chemotaxis"/>
    <property type="evidence" value="ECO:0000314"/>
    <property type="project" value="BHF-UCL"/>
</dbReference>
<dbReference type="GO" id="GO:0031394">
    <property type="term" value="P:positive regulation of prostaglandin biosynthetic process"/>
    <property type="evidence" value="ECO:0007669"/>
    <property type="project" value="Ensembl"/>
</dbReference>
<dbReference type="GO" id="GO:0045582">
    <property type="term" value="P:positive regulation of T cell differentiation"/>
    <property type="evidence" value="ECO:0000315"/>
    <property type="project" value="MGI"/>
</dbReference>
<dbReference type="GO" id="GO:0002830">
    <property type="term" value="P:positive regulation of type 2 immune response"/>
    <property type="evidence" value="ECO:0000315"/>
    <property type="project" value="BHF-UCL"/>
</dbReference>
<dbReference type="GO" id="GO:0046598">
    <property type="term" value="P:positive regulation of viral entry into host cell"/>
    <property type="evidence" value="ECO:0007669"/>
    <property type="project" value="Ensembl"/>
</dbReference>
<dbReference type="GO" id="GO:0045059">
    <property type="term" value="P:positive thymic T cell selection"/>
    <property type="evidence" value="ECO:0000315"/>
    <property type="project" value="MGI"/>
</dbReference>
<dbReference type="GO" id="GO:0001516">
    <property type="term" value="P:prostaglandin biosynthetic process"/>
    <property type="evidence" value="ECO:0000250"/>
    <property type="project" value="UniProtKB"/>
</dbReference>
<dbReference type="GO" id="GO:0050821">
    <property type="term" value="P:protein stabilization"/>
    <property type="evidence" value="ECO:0000315"/>
    <property type="project" value="UniProtKB"/>
</dbReference>
<dbReference type="GO" id="GO:0070206">
    <property type="term" value="P:protein trimerization"/>
    <property type="evidence" value="ECO:0007669"/>
    <property type="project" value="InterPro"/>
</dbReference>
<dbReference type="GO" id="GO:0065003">
    <property type="term" value="P:protein-containing complex assembly"/>
    <property type="evidence" value="ECO:0000314"/>
    <property type="project" value="MGI"/>
</dbReference>
<dbReference type="GO" id="GO:0034341">
    <property type="term" value="P:response to type II interferon"/>
    <property type="evidence" value="ECO:0000314"/>
    <property type="project" value="UniProtKB"/>
</dbReference>
<dbReference type="CDD" id="cd00191">
    <property type="entry name" value="TY"/>
    <property type="match status" value="1"/>
</dbReference>
<dbReference type="FunFam" id="1.10.870.10:FF:000001">
    <property type="entry name" value="HLA class II histocompatibility antigen gamma chain"/>
    <property type="match status" value="1"/>
</dbReference>
<dbReference type="FunFam" id="4.10.800.10:FF:000001">
    <property type="entry name" value="Testican-3 isoform 2"/>
    <property type="match status" value="1"/>
</dbReference>
<dbReference type="Gene3D" id="1.10.870.10">
    <property type="entry name" value="MHC class II-associated invariant chain, trimerisation domain"/>
    <property type="match status" value="1"/>
</dbReference>
<dbReference type="Gene3D" id="4.10.800.10">
    <property type="entry name" value="Thyroglobulin type-1"/>
    <property type="match status" value="1"/>
</dbReference>
<dbReference type="InterPro" id="IPR043530">
    <property type="entry name" value="CD74_antigen"/>
</dbReference>
<dbReference type="InterPro" id="IPR052001">
    <property type="entry name" value="MHC-II_Gamma/Thyroglobulin"/>
</dbReference>
<dbReference type="InterPro" id="IPR015386">
    <property type="entry name" value="MHC_II-assoc_invar/CLIP_MHC-bd"/>
</dbReference>
<dbReference type="InterPro" id="IPR022339">
    <property type="entry name" value="MHC_II-assoc_invar_chain"/>
</dbReference>
<dbReference type="InterPro" id="IPR011988">
    <property type="entry name" value="MHC_II-assoc_invariant_trimer"/>
</dbReference>
<dbReference type="InterPro" id="IPR036613">
    <property type="entry name" value="MHCII_invariant_trimer_sf"/>
</dbReference>
<dbReference type="InterPro" id="IPR000716">
    <property type="entry name" value="Thyroglobulin_1"/>
</dbReference>
<dbReference type="InterPro" id="IPR036857">
    <property type="entry name" value="Thyroglobulin_1_sf"/>
</dbReference>
<dbReference type="PANTHER" id="PTHR14093">
    <property type="entry name" value="HLA CLASS II GAMMA CHAIN"/>
    <property type="match status" value="1"/>
</dbReference>
<dbReference type="PANTHER" id="PTHR14093:SF17">
    <property type="entry name" value="HLA CLASS II HISTOCOMPATIBILITY ANTIGEN GAMMA CHAIN"/>
    <property type="match status" value="1"/>
</dbReference>
<dbReference type="Pfam" id="PF09307">
    <property type="entry name" value="MHC2-interact"/>
    <property type="match status" value="1"/>
</dbReference>
<dbReference type="Pfam" id="PF08831">
    <property type="entry name" value="MHCassoc_trimer"/>
    <property type="match status" value="1"/>
</dbReference>
<dbReference type="Pfam" id="PF00086">
    <property type="entry name" value="Thyroglobulin_1"/>
    <property type="match status" value="1"/>
</dbReference>
<dbReference type="PIRSF" id="PIRSF001992">
    <property type="entry name" value="CD74_antigen"/>
    <property type="match status" value="1"/>
</dbReference>
<dbReference type="PRINTS" id="PR01990">
    <property type="entry name" value="CD74ANTIGEN"/>
</dbReference>
<dbReference type="SMART" id="SM00211">
    <property type="entry name" value="TY"/>
    <property type="match status" value="1"/>
</dbReference>
<dbReference type="SUPFAM" id="SSF48305">
    <property type="entry name" value="Class II MHC-associated invariant chain ectoplasmic trimerization domain"/>
    <property type="match status" value="1"/>
</dbReference>
<dbReference type="SUPFAM" id="SSF57610">
    <property type="entry name" value="Thyroglobulin type-1 domain"/>
    <property type="match status" value="1"/>
</dbReference>
<dbReference type="PROSITE" id="PS00484">
    <property type="entry name" value="THYROGLOBULIN_1_1"/>
    <property type="match status" value="1"/>
</dbReference>
<dbReference type="PROSITE" id="PS51162">
    <property type="entry name" value="THYROGLOBULIN_1_2"/>
    <property type="match status" value="1"/>
</dbReference>
<comment type="function">
    <text evidence="10 11">Plays a critical role in MHC class II antigen processing by stabilizing peptide-free class II alpha/beta heterodimers in a complex soon after their synthesis and directing transport of the complex from the endoplasmic reticulum to compartments where peptide loading of class II takes place. Enhance also the stimulation of T-cell responses through interaction with CD44.</text>
</comment>
<comment type="function">
    <molecule>Isoform Long</molecule>
    <text evidence="6 7">Stabilizes the conformation of mature CTSL by binding to its active site and serving as a chaperone to help maintain a pool of mature enzyme in endocytic compartments and extracellular space of antigen-presenting cells (APCs).</text>
</comment>
<comment type="function">
    <molecule>Class-II-associated invariant chain peptide</molecule>
    <text evidence="2">Binds to the peptide-binding site of MHC class II alpha/beta heterodimers forming an alpha-beta-CLIP complex, thereby preventing the loading of antigenic peptides to the MHC class II complex until its release by HLA-DM in the endosome.</text>
</comment>
<comment type="subunit">
    <text evidence="1 10">Nonamer composed of three alpha/beta/gamma heterotrimers. Interacts with CD44; this complex is essential for the MIF-induced signaling cascade that results in B cell survival.</text>
</comment>
<comment type="subunit">
    <molecule>Isoform Long</molecule>
    <text evidence="6 7">Interacts with the mature form of CTSL; the complex survive in neutral pH environment.</text>
</comment>
<comment type="subcellular location">
    <molecule>Isoform Long</molecule>
    <subcellularLocation>
        <location evidence="6">Late endosome</location>
    </subcellularLocation>
    <subcellularLocation>
        <location evidence="6">Lysosome</location>
    </subcellularLocation>
</comment>
<comment type="subcellular location">
    <subcellularLocation>
        <location evidence="2">Cell membrane</location>
        <topology evidence="2">Single-pass type II membrane protein</topology>
    </subcellularLocation>
    <subcellularLocation>
        <location evidence="2">Endoplasmic reticulum membrane</location>
    </subcellularLocation>
    <subcellularLocation>
        <location evidence="2">Golgi apparatus</location>
        <location evidence="2">trans-Golgi network</location>
    </subcellularLocation>
    <subcellularLocation>
        <location evidence="2">Endosome</location>
    </subcellularLocation>
    <subcellularLocation>
        <location evidence="2">Lysosome</location>
    </subcellularLocation>
    <subcellularLocation>
        <location evidence="2">Secreted</location>
    </subcellularLocation>
    <text evidence="2">Transits through a number of intracellular compartments in the endocytic pathway. It can either undergo proteolysis or reach the cell membrane.</text>
</comment>
<comment type="alternative products">
    <event type="alternative splicing"/>
    <isoform>
        <id>P04441-1</id>
        <name>Long</name>
        <name evidence="12 13 15">p41</name>
        <sequence type="displayed"/>
    </isoform>
    <isoform>
        <id>P04441-2</id>
        <name>Short</name>
        <name evidence="15">p31</name>
        <sequence type="described" ref="VSP_005332"/>
    </isoform>
</comment>
<comment type="tissue specificity">
    <molecule>Isoform Long</molecule>
    <text evidence="6 7 11">Expressed in thymus and lymph noodes (PubMed:8977190). Expressed by antigen-presenting cells (APCs) (PubMed:11483509, PubMed:12417635).</text>
</comment>
<comment type="tissue specificity">
    <molecule>Isoform Short</molecule>
    <text evidence="11">Expressed in thymus and lymph noodes.</text>
</comment>
<comment type="induction">
    <text evidence="8">Expression is induced by IFNG and LPS, through CIITA.</text>
</comment>
<comment type="disruption phenotype">
    <text evidence="11">Mutants for Long isoform or Short isoform exhibit similar functional capabilities.</text>
</comment>
<reference key="1">
    <citation type="journal article" date="1987" name="EMBO J.">
        <title>Primary structure of the gene for the murine Ia antigen-associated invariant chains (Ii). An alternatively spliced exon encodes a cysteine-rich domain highly homologous to a repetitive sequence of thyroglobulin.</title>
        <authorList>
            <person name="Koch N."/>
            <person name="Lauer W."/>
            <person name="Habicht J."/>
            <person name="Dobberstein B."/>
        </authorList>
    </citation>
    <scope>NUCLEOTIDE SEQUENCE [GENOMIC DNA] (ISOFORM LONG)</scope>
    <scope>ALTERNATIVE SPLICING</scope>
    <source>
        <strain>AKR/J</strain>
    </source>
</reference>
<reference key="2">
    <citation type="journal article" date="1989" name="Nucleic Acids Res.">
        <title>Complete sequence of the murine invariant chain (Ii) gene.</title>
        <authorList>
            <person name="Zhu L."/>
            <person name="Jones P.P."/>
        </authorList>
    </citation>
    <scope>NUCLEOTIDE SEQUENCE [GENOMIC DNA]</scope>
    <source>
        <strain>AKR/J</strain>
        <tissue>Liver</tissue>
    </source>
</reference>
<reference key="3">
    <citation type="journal article" date="2004" name="Genome Res.">
        <title>The status, quality, and expansion of the NIH full-length cDNA project: the Mammalian Gene Collection (MGC).</title>
        <authorList>
            <consortium name="The MGC Project Team"/>
        </authorList>
    </citation>
    <scope>NUCLEOTIDE SEQUENCE [LARGE SCALE MRNA] (ISOFORM LONG)</scope>
    <source>
        <tissue>Mammary gland</tissue>
    </source>
</reference>
<reference key="4">
    <citation type="submission" date="1988-03" db="EMBL/GenBank/DDBJ databases">
        <title>Nucleotide sequences of the murine Ia-associated invariant chain (Ii) and I-E (H-2S, Beta) chain expressible cDNA clones.</title>
        <authorList>
            <person name="Stone J."/>
            <person name="Perry R."/>
            <person name="Todd J.A."/>
            <person name="McDevitt H.O."/>
        </authorList>
    </citation>
    <scope>NUCLEOTIDE SEQUENCE [MRNA] OF 1-58</scope>
    <source>
        <tissue>Spleen</tissue>
    </source>
</reference>
<reference key="5">
    <citation type="journal article" date="1990" name="J. Immunol.">
        <title>The IFN-gamma response of the murine invariant chain gene is mediated by a complex enhancer that includes several MHC class II consensus elements.</title>
        <authorList>
            <person name="Eades A.-M."/>
            <person name="Litfin M."/>
            <person name="Rahmsdorf H.J."/>
        </authorList>
    </citation>
    <scope>NUCLEOTIDE SEQUENCE [GENOMIC DNA] OF 1-25</scope>
</reference>
<reference key="6">
    <citation type="journal article" date="1984" name="EMBO J.">
        <title>Structure of the murine Ia-associated invariant (Ii) chain as deduced from a cDNA clone.</title>
        <authorList>
            <person name="Singer P.A."/>
            <person name="Lauer W."/>
            <person name="Dembic Z."/>
            <person name="Mayer W.E."/>
            <person name="Lipp J."/>
            <person name="Koch N."/>
            <person name="Hammerling G."/>
            <person name="Klein J."/>
            <person name="Dobberstein B."/>
        </authorList>
    </citation>
    <scope>NUCLEOTIDE SEQUENCE [MRNA] OF 47-279 (ISOFORM SHORT)</scope>
</reference>
<reference key="7">
    <citation type="journal article" date="1988" name="Proc. Natl. Acad. Sci. U.S.A.">
        <title>Identification of the glycosaminoglycan-attachment site of mouse invariant-chain proteoglycan core protein by site-directed mutagenesis.</title>
        <authorList>
            <person name="Miller J."/>
            <person name="Hatch J.A."/>
            <person name="Simonis S."/>
            <person name="Cullen S.E."/>
        </authorList>
    </citation>
    <scope>GLYCOSYLATION AT SER-265</scope>
    <scope>MUTAGENESIS OF SER-265</scope>
</reference>
<reference key="8">
    <citation type="journal article" date="1993" name="Cell">
        <title>The chondroitin sulfate form of invariant chain can enhance stimulation of T cell responses through interaction with CD44.</title>
        <authorList>
            <person name="Naujokas M.F."/>
            <person name="Morin M."/>
            <person name="Anderson M.S."/>
            <person name="Peterson M."/>
            <person name="Miller J."/>
        </authorList>
    </citation>
    <scope>FUNCTION</scope>
    <scope>INTERACTION WITH CD44</scope>
</reference>
<reference key="9">
    <citation type="journal article" date="1997" name="J. Immunol.">
        <title>In vivo functions mediated by the p41 isoform of the MHC class II-associated invariant chain.</title>
        <authorList>
            <person name="Takaesu N.T."/>
            <person name="Lower J.A."/>
            <person name="Yelon D."/>
            <person name="Robertson E.J."/>
            <person name="Bikoff E.K."/>
        </authorList>
    </citation>
    <scope>FUNCTION</scope>
    <scope>ALTERNATIVE SPLICING</scope>
    <scope>TISSUE SPECIFICITY</scope>
    <scope>DISRUPTION PHENOTYPE</scope>
</reference>
<reference key="10">
    <citation type="journal article" date="2001" name="EMBO J.">
        <title>The p41 isoform of invariant chain is a chaperone for cathepsin L.</title>
        <authorList>
            <person name="Lennon-Dumenil A.M."/>
            <person name="Roberts R.A."/>
            <person name="Valentijn K."/>
            <person name="Driessen C."/>
            <person name="Overkleeft H.S."/>
            <person name="Erickson A."/>
            <person name="Peters P.J."/>
            <person name="Bikoff E."/>
            <person name="Ploegh H.L."/>
            <person name="Wolf Bryant P."/>
        </authorList>
    </citation>
    <scope>FUNCTION (LONG ISOFORM)</scope>
    <scope>TISSUE SPECIFICITY</scope>
    <scope>INTERACTION WITH CTSL</scope>
    <scope>SUBCELLULAR LOCATION</scope>
</reference>
<reference key="11">
    <citation type="journal article" date="2002" name="J. Exp. Med.">
        <title>Invariant chain controls the activity of extracellular cathepsin L.</title>
        <authorList>
            <person name="Fiebiger E."/>
            <person name="Maehr R."/>
            <person name="Villadangos J."/>
            <person name="Weber E."/>
            <person name="Erickson A."/>
            <person name="Bikoff E."/>
            <person name="Ploegh H.L."/>
            <person name="Lennon-Dumenil A.M."/>
        </authorList>
    </citation>
    <scope>FUNCTION (LONG ISOFORM)</scope>
    <scope>TISSUE SPECIFICITY</scope>
    <scope>INTERACTION WITH CTSL</scope>
    <scope>SUBCELLULAR LOCATION</scope>
</reference>
<reference key="12">
    <citation type="journal article" date="2009" name="Immunity">
        <title>The phagosomal proteome in interferon-gamma-activated macrophages.</title>
        <authorList>
            <person name="Trost M."/>
            <person name="English L."/>
            <person name="Lemieux S."/>
            <person name="Courcelles M."/>
            <person name="Desjardins M."/>
            <person name="Thibault P."/>
        </authorList>
    </citation>
    <scope>PHOSPHORYLATION [LARGE SCALE ANALYSIS] AT SER-9</scope>
    <scope>IDENTIFICATION BY MASS SPECTROMETRY [LARGE SCALE ANALYSIS]</scope>
</reference>
<reference key="13">
    <citation type="journal article" date="2010" name="Cell">
        <title>A tissue-specific atlas of mouse protein phosphorylation and expression.</title>
        <authorList>
            <person name="Huttlin E.L."/>
            <person name="Jedrychowski M.P."/>
            <person name="Elias J.E."/>
            <person name="Goswami T."/>
            <person name="Rad R."/>
            <person name="Beausoleil S.A."/>
            <person name="Villen J."/>
            <person name="Haas W."/>
            <person name="Sowa M.E."/>
            <person name="Gygi S.P."/>
        </authorList>
    </citation>
    <scope>IDENTIFICATION BY MASS SPECTROMETRY [LARGE SCALE ANALYSIS]</scope>
    <source>
        <tissue>Liver</tissue>
        <tissue>Lung</tissue>
        <tissue>Spleen</tissue>
    </source>
</reference>
<reference key="14">
    <citation type="journal article" date="2020" name="Science">
        <title>MHC class II transactivator CIITA induces cell resistance to Ebola virus and SARS-like coronaviruses.</title>
        <authorList>
            <person name="Bruchez A."/>
            <person name="Sha K."/>
            <person name="Johnson J."/>
            <person name="Chen L."/>
            <person name="Stefani C."/>
            <person name="McConnell H."/>
            <person name="Gaucherand L."/>
            <person name="Prins R."/>
            <person name="Matreyek K.A."/>
            <person name="Hume A.J."/>
            <person name="Muehlberger E."/>
            <person name="Schmidt E.V."/>
            <person name="Olinger G.G."/>
            <person name="Stuart L.M."/>
            <person name="Lacy-Hulbert A."/>
        </authorList>
    </citation>
    <scope>INDUCTION BY LPS</scope>
</reference>
<proteinExistence type="evidence at protein level"/>
<protein>
    <recommendedName>
        <fullName evidence="16">H-2 class II histocompatibility antigen gamma chain</fullName>
    </recommendedName>
    <alternativeName>
        <fullName>Ia antigen-associated invariant chain</fullName>
        <shortName evidence="15">Ii</shortName>
        <shortName evidence="15">Ii chain</shortName>
    </alternativeName>
    <alternativeName>
        <fullName>MHC class II-associated invariant chain</fullName>
    </alternativeName>
    <cdAntigenName>CD74</cdAntigenName>
    <component>
        <recommendedName>
            <fullName evidence="2">Class-II-associated invariant chain peptide</fullName>
            <shortName evidence="2">CLIP</shortName>
        </recommendedName>
    </component>
</protein>